<reference key="1">
    <citation type="journal article" date="1998" name="Nature">
        <title>Deciphering the biology of Mycobacterium tuberculosis from the complete genome sequence.</title>
        <authorList>
            <person name="Cole S.T."/>
            <person name="Brosch R."/>
            <person name="Parkhill J."/>
            <person name="Garnier T."/>
            <person name="Churcher C.M."/>
            <person name="Harris D.E."/>
            <person name="Gordon S.V."/>
            <person name="Eiglmeier K."/>
            <person name="Gas S."/>
            <person name="Barry C.E. III"/>
            <person name="Tekaia F."/>
            <person name="Badcock K."/>
            <person name="Basham D."/>
            <person name="Brown D."/>
            <person name="Chillingworth T."/>
            <person name="Connor R."/>
            <person name="Davies R.M."/>
            <person name="Devlin K."/>
            <person name="Feltwell T."/>
            <person name="Gentles S."/>
            <person name="Hamlin N."/>
            <person name="Holroyd S."/>
            <person name="Hornsby T."/>
            <person name="Jagels K."/>
            <person name="Krogh A."/>
            <person name="McLean J."/>
            <person name="Moule S."/>
            <person name="Murphy L.D."/>
            <person name="Oliver S."/>
            <person name="Osborne J."/>
            <person name="Quail M.A."/>
            <person name="Rajandream M.A."/>
            <person name="Rogers J."/>
            <person name="Rutter S."/>
            <person name="Seeger K."/>
            <person name="Skelton S."/>
            <person name="Squares S."/>
            <person name="Squares R."/>
            <person name="Sulston J.E."/>
            <person name="Taylor K."/>
            <person name="Whitehead S."/>
            <person name="Barrell B.G."/>
        </authorList>
    </citation>
    <scope>NUCLEOTIDE SEQUENCE [LARGE SCALE GENOMIC DNA]</scope>
    <source>
        <strain>ATCC 25618 / H37Rv</strain>
    </source>
</reference>
<reference key="2">
    <citation type="journal article" date="2002" name="Infect. Immun.">
        <title>IdeR, an essential gene in Mycobacterium tuberculosis: role of IdeR in iron-dependent gene expression, iron metabolism, and oxidative stress response.</title>
        <authorList>
            <person name="Rodriguez G.M."/>
            <person name="Voskuil M.I."/>
            <person name="Gold B."/>
            <person name="Schoolnik G.K."/>
            <person name="Smith I."/>
        </authorList>
    </citation>
    <scope>INDUCTION</scope>
    <source>
        <strain>ATCC 25618 / H37Rv</strain>
    </source>
</reference>
<reference key="3">
    <citation type="journal article" date="2006" name="Proc. Natl. Acad. Sci. U.S.A.">
        <title>A genetic locus required for iron acquisition in Mycobacterium tuberculosis.</title>
        <authorList>
            <person name="Krithika R."/>
            <person name="Marathe U."/>
            <person name="Saxena P."/>
            <person name="Ansari M.Z."/>
            <person name="Mohanty D."/>
            <person name="Gokhale R.S."/>
        </authorList>
    </citation>
    <scope>FUNCTION</scope>
    <scope>ROLE IN MYCOBACTIN BIOSYNTHESIS</scope>
    <scope>BIOPHYSICOCHEMICAL PROPERTIES</scope>
    <source>
        <strain>ATCC 25618 / H37Rv</strain>
    </source>
</reference>
<reference key="4">
    <citation type="journal article" date="2011" name="Mol. Cell. Proteomics">
        <title>Proteogenomic analysis of Mycobacterium tuberculosis by high resolution mass spectrometry.</title>
        <authorList>
            <person name="Kelkar D.S."/>
            <person name="Kumar D."/>
            <person name="Kumar P."/>
            <person name="Balakrishnan L."/>
            <person name="Muthusamy B."/>
            <person name="Yadav A.K."/>
            <person name="Shrivastava P."/>
            <person name="Marimuthu A."/>
            <person name="Anand S."/>
            <person name="Sundaram H."/>
            <person name="Kingsbury R."/>
            <person name="Harsha H.C."/>
            <person name="Nair B."/>
            <person name="Prasad T.S."/>
            <person name="Chauhan D.S."/>
            <person name="Katoch K."/>
            <person name="Katoch V.M."/>
            <person name="Kumar P."/>
            <person name="Chaerkady R."/>
            <person name="Ramachandran S."/>
            <person name="Dash D."/>
            <person name="Pandey A."/>
        </authorList>
    </citation>
    <scope>IDENTIFICATION BY MASS SPECTROMETRY [LARGE SCALE ANALYSIS]</scope>
    <source>
        <strain>ATCC 25618 / H37Rv</strain>
    </source>
</reference>
<reference key="5">
    <citation type="journal article" date="2005" name="J. Biol. Chem.">
        <title>The crystal structure of Rv1347c, a putative antibiotic resistance protein from Mycobacterium tuberculosis, reveals a GCN5-related fold and suggests an alternative function in siderophore biosynthesis.</title>
        <authorList>
            <person name="Card G.L."/>
            <person name="Peterson N.A."/>
            <person name="Smith C.A."/>
            <person name="Rupp B."/>
            <person name="Schick B.M."/>
            <person name="Baker E.N."/>
        </authorList>
    </citation>
    <scope>X-RAY CRYSTALLOGRAPHY (2.2 ANGSTROMS)</scope>
    <scope>SUBUNIT</scope>
    <source>
        <strain>ATCC 25618 / H37Rv</strain>
    </source>
</reference>
<evidence type="ECO:0000255" key="1"/>
<evidence type="ECO:0000269" key="2">
    <source>
    </source>
</evidence>
<evidence type="ECO:0000269" key="3">
    <source>
    </source>
</evidence>
<evidence type="ECO:0000269" key="4">
    <source>
    </source>
</evidence>
<evidence type="ECO:0000305" key="5"/>
<evidence type="ECO:0007829" key="6">
    <source>
        <dbReference type="PDB" id="1YK3"/>
    </source>
</evidence>
<sequence>MTKPTSAGQADDALVRLARERFDLPDQVRRLARPPVPSLEPPYGLRVAQLTDAEMLAEWMNRPHLAAAWEYDWPASRWRQHLNAQLEGTYSLPLIGSWHGTDGGYLELYWAAKDLISHYYDADPYDLGLHAAIADLSKVNRGFGPLLLPRIVASVFANEPRCRRIMFDPDHRNTATRRLCEWAGCKFLGEHDTTNRRMALYALEAPTTAA</sequence>
<gene>
    <name type="primary">mbtK</name>
    <name type="ordered locus">Rv1347c</name>
    <name type="ORF">MTCY02B10.11c</name>
</gene>
<name>MBTK_MYCTU</name>
<comment type="function">
    <text evidence="4">Acyltransferase required for the direct transfer of medium- to long-chain fatty acyl moieties from a carrier protein (MbtL) on to the epsilon-amino group of lysine residue in the mycobactin core.</text>
</comment>
<comment type="biophysicochemical properties">
    <kinetics>
        <KM evidence="4">0.72 uM for lauroyl-ACP</KM>
        <KM evidence="4">19.5 uM for palmitoyl-CoA</KM>
        <KM evidence="4">33.93 uM for lauroyl-CoA</KM>
        <KM evidence="4">86.12 uM for decanoyl-CoA</KM>
        <KM evidence="4">166.2 uM for hexanoyl-CoA</KM>
    </kinetics>
</comment>
<comment type="pathway">
    <text>Siderophore biosynthesis; mycobactin biosynthesis.</text>
</comment>
<comment type="subunit">
    <text evidence="3">Monomer.</text>
</comment>
<comment type="induction">
    <text evidence="2">Induced by iron starvation conditions. Transcriptionally repressed by IdeR and iron.</text>
</comment>
<comment type="similarity">
    <text evidence="5">Belongs to the lysine N-acyltransferase MbtK family.</text>
</comment>
<organism>
    <name type="scientific">Mycobacterium tuberculosis (strain ATCC 25618 / H37Rv)</name>
    <dbReference type="NCBI Taxonomy" id="83332"/>
    <lineage>
        <taxon>Bacteria</taxon>
        <taxon>Bacillati</taxon>
        <taxon>Actinomycetota</taxon>
        <taxon>Actinomycetes</taxon>
        <taxon>Mycobacteriales</taxon>
        <taxon>Mycobacteriaceae</taxon>
        <taxon>Mycobacterium</taxon>
        <taxon>Mycobacterium tuberculosis complex</taxon>
    </lineage>
</organism>
<feature type="chain" id="PRO_0000103819" description="Lysine N-acyltransferase MbtK">
    <location>
        <begin position="1"/>
        <end position="210"/>
    </location>
</feature>
<feature type="active site" description="Proton acceptor" evidence="1">
    <location>
        <position position="168"/>
    </location>
</feature>
<feature type="binding site" evidence="1">
    <location>
        <position position="130"/>
    </location>
    <ligand>
        <name>substrate</name>
    </ligand>
</feature>
<feature type="helix" evidence="6">
    <location>
        <begin position="26"/>
        <end position="29"/>
    </location>
</feature>
<feature type="strand" evidence="6">
    <location>
        <begin position="43"/>
        <end position="47"/>
    </location>
</feature>
<feature type="helix" evidence="6">
    <location>
        <begin position="50"/>
        <end position="52"/>
    </location>
</feature>
<feature type="helix" evidence="6">
    <location>
        <begin position="53"/>
        <end position="60"/>
    </location>
</feature>
<feature type="helix" evidence="6">
    <location>
        <begin position="63"/>
        <end position="69"/>
    </location>
</feature>
<feature type="helix" evidence="6">
    <location>
        <begin position="75"/>
        <end position="86"/>
    </location>
</feature>
<feature type="strand" evidence="6">
    <location>
        <begin position="88"/>
        <end position="98"/>
    </location>
</feature>
<feature type="strand" evidence="6">
    <location>
        <begin position="101"/>
        <end position="110"/>
    </location>
</feature>
<feature type="helix" evidence="6">
    <location>
        <begin position="111"/>
        <end position="113"/>
    </location>
</feature>
<feature type="helix" evidence="6">
    <location>
        <begin position="115"/>
        <end position="118"/>
    </location>
</feature>
<feature type="strand" evidence="6">
    <location>
        <begin position="127"/>
        <end position="134"/>
    </location>
</feature>
<feature type="helix" evidence="6">
    <location>
        <begin position="136"/>
        <end position="139"/>
    </location>
</feature>
<feature type="turn" evidence="6">
    <location>
        <begin position="140"/>
        <end position="142"/>
    </location>
</feature>
<feature type="helix" evidence="6">
    <location>
        <begin position="143"/>
        <end position="158"/>
    </location>
</feature>
<feature type="strand" evidence="6">
    <location>
        <begin position="164"/>
        <end position="167"/>
    </location>
</feature>
<feature type="helix" evidence="6">
    <location>
        <begin position="174"/>
        <end position="183"/>
    </location>
</feature>
<feature type="strand" evidence="6">
    <location>
        <begin position="186"/>
        <end position="192"/>
    </location>
</feature>
<feature type="strand" evidence="6">
    <location>
        <begin position="197"/>
        <end position="204"/>
    </location>
</feature>
<dbReference type="EC" id="2.3.1.-"/>
<dbReference type="EMBL" id="AL123456">
    <property type="protein sequence ID" value="CCP44105.1"/>
    <property type="molecule type" value="Genomic_DNA"/>
</dbReference>
<dbReference type="PIR" id="B70740">
    <property type="entry name" value="B70740"/>
</dbReference>
<dbReference type="RefSeq" id="NP_215863.1">
    <property type="nucleotide sequence ID" value="NC_000962.3"/>
</dbReference>
<dbReference type="RefSeq" id="WP_003406956.1">
    <property type="nucleotide sequence ID" value="NZ_NVQJ01000031.1"/>
</dbReference>
<dbReference type="PDB" id="1YK3">
    <property type="method" value="X-ray"/>
    <property type="resolution" value="2.20 A"/>
    <property type="chains" value="A/B/C/D/E/F/G/H=1-210"/>
</dbReference>
<dbReference type="PDBsum" id="1YK3"/>
<dbReference type="SMR" id="P9WK15"/>
<dbReference type="STRING" id="83332.Rv1347c"/>
<dbReference type="PaxDb" id="83332-Rv1347c"/>
<dbReference type="DNASU" id="886846"/>
<dbReference type="GeneID" id="45425325"/>
<dbReference type="GeneID" id="886846"/>
<dbReference type="KEGG" id="mtu:Rv1347c"/>
<dbReference type="KEGG" id="mtv:RVBD_1347c"/>
<dbReference type="TubercuList" id="Rv1347c"/>
<dbReference type="eggNOG" id="COG1670">
    <property type="taxonomic scope" value="Bacteria"/>
</dbReference>
<dbReference type="InParanoid" id="P9WK15"/>
<dbReference type="OrthoDB" id="9087497at2"/>
<dbReference type="PhylomeDB" id="P9WK15"/>
<dbReference type="BioCyc" id="MetaCyc:G185E-5526-MONOMER"/>
<dbReference type="SABIO-RK" id="P9WK15"/>
<dbReference type="UniPathway" id="UPA00011"/>
<dbReference type="EvolutionaryTrace" id="P9WK15"/>
<dbReference type="Proteomes" id="UP000001584">
    <property type="component" value="Chromosome"/>
</dbReference>
<dbReference type="GO" id="GO:0016747">
    <property type="term" value="F:acyltransferase activity, transferring groups other than amino-acyl groups"/>
    <property type="evidence" value="ECO:0000314"/>
    <property type="project" value="MTBBASE"/>
</dbReference>
<dbReference type="GO" id="GO:0047617">
    <property type="term" value="F:fatty acyl-CoA hydrolase activity"/>
    <property type="evidence" value="ECO:0000314"/>
    <property type="project" value="MTBBASE"/>
</dbReference>
<dbReference type="GO" id="GO:0016410">
    <property type="term" value="F:N-acyltransferase activity"/>
    <property type="evidence" value="ECO:0000314"/>
    <property type="project" value="MTBBASE"/>
</dbReference>
<dbReference type="GO" id="GO:0019540">
    <property type="term" value="P:catechol-containing siderophore biosynthetic process"/>
    <property type="evidence" value="ECO:0000304"/>
    <property type="project" value="MTBBASE"/>
</dbReference>
<dbReference type="FunFam" id="3.40.630.30:FF:000148">
    <property type="entry name" value="Lysine N-acyltransferase MbtK"/>
    <property type="match status" value="1"/>
</dbReference>
<dbReference type="Gene3D" id="3.40.630.30">
    <property type="match status" value="1"/>
</dbReference>
<dbReference type="InterPro" id="IPR016181">
    <property type="entry name" value="Acyl_CoA_acyltransferase"/>
</dbReference>
<dbReference type="InterPro" id="IPR019432">
    <property type="entry name" value="Acyltransferase_MbtK/IucB-like"/>
</dbReference>
<dbReference type="PANTHER" id="PTHR31438">
    <property type="entry name" value="LYSINE N-ACYLTRANSFERASE C17G9.06C-RELATED"/>
    <property type="match status" value="1"/>
</dbReference>
<dbReference type="PANTHER" id="PTHR31438:SF1">
    <property type="entry name" value="LYSINE N-ACYLTRANSFERASE C17G9.06C-RELATED"/>
    <property type="match status" value="1"/>
</dbReference>
<dbReference type="Pfam" id="PF13523">
    <property type="entry name" value="Acetyltransf_8"/>
    <property type="match status" value="1"/>
</dbReference>
<dbReference type="SMART" id="SM01006">
    <property type="entry name" value="AlcB"/>
    <property type="match status" value="1"/>
</dbReference>
<dbReference type="SUPFAM" id="SSF55729">
    <property type="entry name" value="Acyl-CoA N-acyltransferases (Nat)"/>
    <property type="match status" value="1"/>
</dbReference>
<protein>
    <recommendedName>
        <fullName>Lysine N-acyltransferase MbtK</fullName>
        <shortName>N-acyltransferase MbtK</shortName>
        <ecNumber>2.3.1.-</ecNumber>
    </recommendedName>
    <alternativeName>
        <fullName>Mycobactin synthase protein K</fullName>
    </alternativeName>
</protein>
<keyword id="KW-0002">3D-structure</keyword>
<keyword id="KW-0012">Acyltransferase</keyword>
<keyword id="KW-1185">Reference proteome</keyword>
<keyword id="KW-0808">Transferase</keyword>
<proteinExistence type="evidence at protein level"/>
<accession>P9WK15</accession>
<accession>L0T804</accession>
<accession>P64819</accession>
<accession>Q11017</accession>